<dbReference type="EC" id="4.1.1.19" evidence="1"/>
<dbReference type="EMBL" id="CT978603">
    <property type="protein sequence ID" value="CAK29281.1"/>
    <property type="molecule type" value="Genomic_DNA"/>
</dbReference>
<dbReference type="SMR" id="A5GWM2"/>
<dbReference type="STRING" id="316278.SynRCC307_2378"/>
<dbReference type="KEGG" id="syr:SynRCC307_2378"/>
<dbReference type="eggNOG" id="COG1166">
    <property type="taxonomic scope" value="Bacteria"/>
</dbReference>
<dbReference type="HOGENOM" id="CLU_027243_1_0_3"/>
<dbReference type="OrthoDB" id="9802658at2"/>
<dbReference type="UniPathway" id="UPA00186">
    <property type="reaction ID" value="UER00284"/>
</dbReference>
<dbReference type="Proteomes" id="UP000001115">
    <property type="component" value="Chromosome"/>
</dbReference>
<dbReference type="GO" id="GO:0008792">
    <property type="term" value="F:arginine decarboxylase activity"/>
    <property type="evidence" value="ECO:0007669"/>
    <property type="project" value="UniProtKB-UniRule"/>
</dbReference>
<dbReference type="GO" id="GO:0046872">
    <property type="term" value="F:metal ion binding"/>
    <property type="evidence" value="ECO:0007669"/>
    <property type="project" value="UniProtKB-KW"/>
</dbReference>
<dbReference type="GO" id="GO:0006527">
    <property type="term" value="P:arginine catabolic process"/>
    <property type="evidence" value="ECO:0007669"/>
    <property type="project" value="InterPro"/>
</dbReference>
<dbReference type="GO" id="GO:0008295">
    <property type="term" value="P:spermidine biosynthetic process"/>
    <property type="evidence" value="ECO:0007669"/>
    <property type="project" value="UniProtKB-UniRule"/>
</dbReference>
<dbReference type="CDD" id="cd06830">
    <property type="entry name" value="PLPDE_III_ADC"/>
    <property type="match status" value="1"/>
</dbReference>
<dbReference type="Gene3D" id="1.10.287.3440">
    <property type="match status" value="1"/>
</dbReference>
<dbReference type="Gene3D" id="1.20.58.930">
    <property type="match status" value="1"/>
</dbReference>
<dbReference type="Gene3D" id="3.20.20.10">
    <property type="entry name" value="Alanine racemase"/>
    <property type="match status" value="1"/>
</dbReference>
<dbReference type="Gene3D" id="2.40.37.10">
    <property type="entry name" value="Lyase, Ornithine Decarboxylase, Chain A, domain 1"/>
    <property type="match status" value="1"/>
</dbReference>
<dbReference type="HAMAP" id="MF_01417">
    <property type="entry name" value="SpeA"/>
    <property type="match status" value="1"/>
</dbReference>
<dbReference type="InterPro" id="IPR009006">
    <property type="entry name" value="Ala_racemase/Decarboxylase_C"/>
</dbReference>
<dbReference type="InterPro" id="IPR040634">
    <property type="entry name" value="Arg_decarb_HB"/>
</dbReference>
<dbReference type="InterPro" id="IPR041128">
    <property type="entry name" value="Arg_decarbox_C"/>
</dbReference>
<dbReference type="InterPro" id="IPR002985">
    <property type="entry name" value="Arg_decrbxlase"/>
</dbReference>
<dbReference type="InterPro" id="IPR022657">
    <property type="entry name" value="De-COase2_CS"/>
</dbReference>
<dbReference type="InterPro" id="IPR022644">
    <property type="entry name" value="De-COase2_N"/>
</dbReference>
<dbReference type="InterPro" id="IPR022653">
    <property type="entry name" value="De-COase2_pyr-phos_BS"/>
</dbReference>
<dbReference type="InterPro" id="IPR000183">
    <property type="entry name" value="Orn/DAP/Arg_de-COase"/>
</dbReference>
<dbReference type="InterPro" id="IPR029066">
    <property type="entry name" value="PLP-binding_barrel"/>
</dbReference>
<dbReference type="NCBIfam" id="NF003763">
    <property type="entry name" value="PRK05354.1"/>
    <property type="match status" value="1"/>
</dbReference>
<dbReference type="NCBIfam" id="TIGR01273">
    <property type="entry name" value="speA"/>
    <property type="match status" value="1"/>
</dbReference>
<dbReference type="PANTHER" id="PTHR43295">
    <property type="entry name" value="ARGININE DECARBOXYLASE"/>
    <property type="match status" value="1"/>
</dbReference>
<dbReference type="PANTHER" id="PTHR43295:SF9">
    <property type="entry name" value="BIOSYNTHETIC ARGININE DECARBOXYLASE"/>
    <property type="match status" value="1"/>
</dbReference>
<dbReference type="Pfam" id="PF17810">
    <property type="entry name" value="Arg_decarb_HB"/>
    <property type="match status" value="1"/>
</dbReference>
<dbReference type="Pfam" id="PF17944">
    <property type="entry name" value="Arg_decarbox_C"/>
    <property type="match status" value="1"/>
</dbReference>
<dbReference type="Pfam" id="PF02784">
    <property type="entry name" value="Orn_Arg_deC_N"/>
    <property type="match status" value="1"/>
</dbReference>
<dbReference type="PIRSF" id="PIRSF001336">
    <property type="entry name" value="Arg_decrbxlase"/>
    <property type="match status" value="1"/>
</dbReference>
<dbReference type="PRINTS" id="PR01180">
    <property type="entry name" value="ARGDCRBXLASE"/>
</dbReference>
<dbReference type="PRINTS" id="PR01179">
    <property type="entry name" value="ODADCRBXLASE"/>
</dbReference>
<dbReference type="SUPFAM" id="SSF50621">
    <property type="entry name" value="Alanine racemase C-terminal domain-like"/>
    <property type="match status" value="1"/>
</dbReference>
<dbReference type="SUPFAM" id="SSF51419">
    <property type="entry name" value="PLP-binding barrel"/>
    <property type="match status" value="1"/>
</dbReference>
<dbReference type="PROSITE" id="PS00878">
    <property type="entry name" value="ODR_DC_2_1"/>
    <property type="match status" value="1"/>
</dbReference>
<dbReference type="PROSITE" id="PS00879">
    <property type="entry name" value="ODR_DC_2_2"/>
    <property type="match status" value="1"/>
</dbReference>
<sequence length="640" mass="69862">MVVAPSQVEQQNWTPAASAQLYGLDQWGDPYFSVNARGHVLVQPRGDRGGSLDLVELVEGLQSRDLQLPLLIRFEDILEDRLERLHGAFERAIAQYGYGGHYQGVFPVKCNQQRHVVEQLVESGRRWHFGLEAGSKAELLIALSLLDDPKALLICNGYKDQRYIETAILARQLGRQPVVVIEQADEVPRIIEASRNLGAAPLIGVRAKLSTRSTGRWGSSVGEKAKFGLSIPDLLATVEALRDADLLGDLRLLHFHVGSQICDIAVLKDALQEAGQLYVQLASLGAPMGFLDVGGGLGVDYDGSRSATAASTNYSLQNYANDVVATIRECCEPQGIVVPTLVSESGRAIASHFSVLVFNVLGQSGVNQPSIPEAVEGEALIVRNLRETLSGIGPDNLQEAWNDALKFKDDALAAFRLGYLSLTERGKAEQLYWACCSAIADLLPGEEELPDELKGLKAAFASTYYANLSVFRSAPDTWAIDQLFPVMPIHRLEEQPRELGSFADLTCDSDGKLARFIASGSAKPLLELHELKDGEPYWIGLFLGGAYQEVMGNLHNLFGSTNAVSIRLSPGGPYRVEHVVRGQTNSDVLEAMEHNPEALLERLRQASEEAIGSGDLSISAARRLMQHLEGSLRQTTYLEE</sequence>
<proteinExistence type="inferred from homology"/>
<keyword id="KW-0210">Decarboxylase</keyword>
<keyword id="KW-0456">Lyase</keyword>
<keyword id="KW-0460">Magnesium</keyword>
<keyword id="KW-0479">Metal-binding</keyword>
<keyword id="KW-0620">Polyamine biosynthesis</keyword>
<keyword id="KW-0663">Pyridoxal phosphate</keyword>
<keyword id="KW-1185">Reference proteome</keyword>
<keyword id="KW-0745">Spermidine biosynthesis</keyword>
<name>SPEA_SYNR3</name>
<accession>A5GWM2</accession>
<gene>
    <name evidence="1" type="primary">speA</name>
    <name type="ordered locus">SynRCC307_2378</name>
</gene>
<reference key="1">
    <citation type="submission" date="2006-05" db="EMBL/GenBank/DDBJ databases">
        <authorList>
            <consortium name="Genoscope"/>
        </authorList>
    </citation>
    <scope>NUCLEOTIDE SEQUENCE [LARGE SCALE GENOMIC DNA]</scope>
    <source>
        <strain>RCC307</strain>
    </source>
</reference>
<feature type="chain" id="PRO_1000024276" description="Biosynthetic arginine decarboxylase">
    <location>
        <begin position="1"/>
        <end position="640"/>
    </location>
</feature>
<feature type="binding site" evidence="1">
    <location>
        <begin position="291"/>
        <end position="301"/>
    </location>
    <ligand>
        <name>substrate</name>
    </ligand>
</feature>
<feature type="modified residue" description="N6-(pyridoxal phosphate)lysine" evidence="1">
    <location>
        <position position="109"/>
    </location>
</feature>
<evidence type="ECO:0000255" key="1">
    <source>
        <dbReference type="HAMAP-Rule" id="MF_01417"/>
    </source>
</evidence>
<organism>
    <name type="scientific">Synechococcus sp. (strain RCC307)</name>
    <dbReference type="NCBI Taxonomy" id="316278"/>
    <lineage>
        <taxon>Bacteria</taxon>
        <taxon>Bacillati</taxon>
        <taxon>Cyanobacteriota</taxon>
        <taxon>Cyanophyceae</taxon>
        <taxon>Synechococcales</taxon>
        <taxon>Synechococcaceae</taxon>
        <taxon>Synechococcus</taxon>
    </lineage>
</organism>
<comment type="function">
    <text evidence="1">Catalyzes the biosynthesis of agmatine from arginine.</text>
</comment>
<comment type="catalytic activity">
    <reaction evidence="1">
        <text>L-arginine + H(+) = agmatine + CO2</text>
        <dbReference type="Rhea" id="RHEA:17641"/>
        <dbReference type="ChEBI" id="CHEBI:15378"/>
        <dbReference type="ChEBI" id="CHEBI:16526"/>
        <dbReference type="ChEBI" id="CHEBI:32682"/>
        <dbReference type="ChEBI" id="CHEBI:58145"/>
        <dbReference type="EC" id="4.1.1.19"/>
    </reaction>
</comment>
<comment type="cofactor">
    <cofactor evidence="1">
        <name>Mg(2+)</name>
        <dbReference type="ChEBI" id="CHEBI:18420"/>
    </cofactor>
</comment>
<comment type="cofactor">
    <cofactor evidence="1">
        <name>pyridoxal 5'-phosphate</name>
        <dbReference type="ChEBI" id="CHEBI:597326"/>
    </cofactor>
</comment>
<comment type="pathway">
    <text evidence="1">Amine and polyamine biosynthesis; agmatine biosynthesis; agmatine from L-arginine: step 1/1.</text>
</comment>
<comment type="similarity">
    <text evidence="1">Belongs to the Orn/Lys/Arg decarboxylase class-II family. SpeA subfamily.</text>
</comment>
<protein>
    <recommendedName>
        <fullName evidence="1">Biosynthetic arginine decarboxylase</fullName>
        <shortName evidence="1">ADC</shortName>
        <ecNumber evidence="1">4.1.1.19</ecNumber>
    </recommendedName>
</protein>